<feature type="chain" id="PRO_1000004400" description="UDP-N-acetylmuramate--L-alanine ligase">
    <location>
        <begin position="1"/>
        <end position="468"/>
    </location>
</feature>
<feature type="binding site" evidence="1">
    <location>
        <begin position="118"/>
        <end position="124"/>
    </location>
    <ligand>
        <name>ATP</name>
        <dbReference type="ChEBI" id="CHEBI:30616"/>
    </ligand>
</feature>
<keyword id="KW-0067">ATP-binding</keyword>
<keyword id="KW-0131">Cell cycle</keyword>
<keyword id="KW-0132">Cell division</keyword>
<keyword id="KW-0133">Cell shape</keyword>
<keyword id="KW-0961">Cell wall biogenesis/degradation</keyword>
<keyword id="KW-0963">Cytoplasm</keyword>
<keyword id="KW-0436">Ligase</keyword>
<keyword id="KW-0547">Nucleotide-binding</keyword>
<keyword id="KW-0573">Peptidoglycan synthesis</keyword>
<keyword id="KW-1185">Reference proteome</keyword>
<gene>
    <name evidence="1" type="primary">murC</name>
    <name type="ordered locus">RD1_3355</name>
</gene>
<sequence>MNAATKLPGDVGPIHFVGIGGIGMSGIAEVLLNHGYRVQGSDLKPTRITRRLEELGARVFVGQRPENIEDAEVIVISSAIKPGNAELDAARARGLPIVRRAEMLGELMRLKSNIAVAGTHGKTTTTTMVATLLDAGEFDPTVVNGGIIHAYGSNARKGEGEWMVVEADESDGTFNRLPATIAIVTNIDPEHMEHWGDFDTLRQGFLDFVSNIPFYGVAVCCTDHPEVQALVGKITDRRVITYGFNAQADVRAVNLRYAGGVAYFDVALQAEGTVIEGCSLPMPGDHNVSNALSAIAVARHLGMKAEVIKTALAAFGGVNRRFTRVGEIDGVTIIDDYGHHPVEIAAVLKAARQATEGRVIAVHQPHRYSRLSSLFDDFCACFNDADVVGIAEVYAAGEDPIPGAGRDDLVAGLIRHGHRHARAVVGEDDLERLVREQTRPGDMVVCLGAGTISAWANGLPARLQKGAA</sequence>
<organism>
    <name type="scientific">Roseobacter denitrificans (strain ATCC 33942 / OCh 114)</name>
    <name type="common">Erythrobacter sp. (strain OCh 114)</name>
    <name type="synonym">Roseobacter denitrificans</name>
    <dbReference type="NCBI Taxonomy" id="375451"/>
    <lineage>
        <taxon>Bacteria</taxon>
        <taxon>Pseudomonadati</taxon>
        <taxon>Pseudomonadota</taxon>
        <taxon>Alphaproteobacteria</taxon>
        <taxon>Rhodobacterales</taxon>
        <taxon>Roseobacteraceae</taxon>
        <taxon>Roseobacter</taxon>
    </lineage>
</organism>
<name>MURC_ROSDO</name>
<dbReference type="EC" id="6.3.2.8" evidence="1"/>
<dbReference type="EMBL" id="CP000362">
    <property type="protein sequence ID" value="ABG32852.1"/>
    <property type="molecule type" value="Genomic_DNA"/>
</dbReference>
<dbReference type="RefSeq" id="WP_011569468.1">
    <property type="nucleotide sequence ID" value="NC_008209.1"/>
</dbReference>
<dbReference type="SMR" id="Q163J1"/>
<dbReference type="STRING" id="375451.RD1_3355"/>
<dbReference type="KEGG" id="rde:RD1_3355"/>
<dbReference type="eggNOG" id="COG0773">
    <property type="taxonomic scope" value="Bacteria"/>
</dbReference>
<dbReference type="HOGENOM" id="CLU_028104_2_2_5"/>
<dbReference type="OrthoDB" id="9804126at2"/>
<dbReference type="UniPathway" id="UPA00219"/>
<dbReference type="Proteomes" id="UP000007029">
    <property type="component" value="Chromosome"/>
</dbReference>
<dbReference type="GO" id="GO:0005737">
    <property type="term" value="C:cytoplasm"/>
    <property type="evidence" value="ECO:0007669"/>
    <property type="project" value="UniProtKB-SubCell"/>
</dbReference>
<dbReference type="GO" id="GO:0005524">
    <property type="term" value="F:ATP binding"/>
    <property type="evidence" value="ECO:0007669"/>
    <property type="project" value="UniProtKB-UniRule"/>
</dbReference>
<dbReference type="GO" id="GO:0008763">
    <property type="term" value="F:UDP-N-acetylmuramate-L-alanine ligase activity"/>
    <property type="evidence" value="ECO:0007669"/>
    <property type="project" value="UniProtKB-UniRule"/>
</dbReference>
<dbReference type="GO" id="GO:0051301">
    <property type="term" value="P:cell division"/>
    <property type="evidence" value="ECO:0007669"/>
    <property type="project" value="UniProtKB-KW"/>
</dbReference>
<dbReference type="GO" id="GO:0071555">
    <property type="term" value="P:cell wall organization"/>
    <property type="evidence" value="ECO:0007669"/>
    <property type="project" value="UniProtKB-KW"/>
</dbReference>
<dbReference type="GO" id="GO:0009252">
    <property type="term" value="P:peptidoglycan biosynthetic process"/>
    <property type="evidence" value="ECO:0007669"/>
    <property type="project" value="UniProtKB-UniRule"/>
</dbReference>
<dbReference type="GO" id="GO:0008360">
    <property type="term" value="P:regulation of cell shape"/>
    <property type="evidence" value="ECO:0007669"/>
    <property type="project" value="UniProtKB-KW"/>
</dbReference>
<dbReference type="Gene3D" id="3.90.190.20">
    <property type="entry name" value="Mur ligase, C-terminal domain"/>
    <property type="match status" value="1"/>
</dbReference>
<dbReference type="Gene3D" id="3.40.1190.10">
    <property type="entry name" value="Mur-like, catalytic domain"/>
    <property type="match status" value="1"/>
</dbReference>
<dbReference type="Gene3D" id="3.40.50.720">
    <property type="entry name" value="NAD(P)-binding Rossmann-like Domain"/>
    <property type="match status" value="1"/>
</dbReference>
<dbReference type="HAMAP" id="MF_00046">
    <property type="entry name" value="MurC"/>
    <property type="match status" value="1"/>
</dbReference>
<dbReference type="InterPro" id="IPR036565">
    <property type="entry name" value="Mur-like_cat_sf"/>
</dbReference>
<dbReference type="InterPro" id="IPR004101">
    <property type="entry name" value="Mur_ligase_C"/>
</dbReference>
<dbReference type="InterPro" id="IPR036615">
    <property type="entry name" value="Mur_ligase_C_dom_sf"/>
</dbReference>
<dbReference type="InterPro" id="IPR013221">
    <property type="entry name" value="Mur_ligase_cen"/>
</dbReference>
<dbReference type="InterPro" id="IPR000713">
    <property type="entry name" value="Mur_ligase_N"/>
</dbReference>
<dbReference type="InterPro" id="IPR050061">
    <property type="entry name" value="MurCDEF_pg_biosynth"/>
</dbReference>
<dbReference type="InterPro" id="IPR005758">
    <property type="entry name" value="UDP-N-AcMur_Ala_ligase_MurC"/>
</dbReference>
<dbReference type="NCBIfam" id="TIGR01082">
    <property type="entry name" value="murC"/>
    <property type="match status" value="1"/>
</dbReference>
<dbReference type="PANTHER" id="PTHR43445:SF3">
    <property type="entry name" value="UDP-N-ACETYLMURAMATE--L-ALANINE LIGASE"/>
    <property type="match status" value="1"/>
</dbReference>
<dbReference type="PANTHER" id="PTHR43445">
    <property type="entry name" value="UDP-N-ACETYLMURAMATE--L-ALANINE LIGASE-RELATED"/>
    <property type="match status" value="1"/>
</dbReference>
<dbReference type="Pfam" id="PF01225">
    <property type="entry name" value="Mur_ligase"/>
    <property type="match status" value="1"/>
</dbReference>
<dbReference type="Pfam" id="PF02875">
    <property type="entry name" value="Mur_ligase_C"/>
    <property type="match status" value="1"/>
</dbReference>
<dbReference type="Pfam" id="PF08245">
    <property type="entry name" value="Mur_ligase_M"/>
    <property type="match status" value="1"/>
</dbReference>
<dbReference type="SUPFAM" id="SSF51984">
    <property type="entry name" value="MurCD N-terminal domain"/>
    <property type="match status" value="1"/>
</dbReference>
<dbReference type="SUPFAM" id="SSF53623">
    <property type="entry name" value="MurD-like peptide ligases, catalytic domain"/>
    <property type="match status" value="1"/>
</dbReference>
<dbReference type="SUPFAM" id="SSF53244">
    <property type="entry name" value="MurD-like peptide ligases, peptide-binding domain"/>
    <property type="match status" value="1"/>
</dbReference>
<reference key="1">
    <citation type="journal article" date="2007" name="J. Bacteriol.">
        <title>The complete genome sequence of Roseobacter denitrificans reveals a mixotrophic rather than photosynthetic metabolism.</title>
        <authorList>
            <person name="Swingley W.D."/>
            <person name="Sadekar S."/>
            <person name="Mastrian S.D."/>
            <person name="Matthies H.J."/>
            <person name="Hao J."/>
            <person name="Ramos H."/>
            <person name="Acharya C.R."/>
            <person name="Conrad A.L."/>
            <person name="Taylor H.L."/>
            <person name="Dejesa L.C."/>
            <person name="Shah M.K."/>
            <person name="O'Huallachain M.E."/>
            <person name="Lince M.T."/>
            <person name="Blankenship R.E."/>
            <person name="Beatty J.T."/>
            <person name="Touchman J.W."/>
        </authorList>
    </citation>
    <scope>NUCLEOTIDE SEQUENCE [LARGE SCALE GENOMIC DNA]</scope>
    <source>
        <strain>ATCC 33942 / OCh 114</strain>
    </source>
</reference>
<protein>
    <recommendedName>
        <fullName evidence="1">UDP-N-acetylmuramate--L-alanine ligase</fullName>
        <ecNumber evidence="1">6.3.2.8</ecNumber>
    </recommendedName>
    <alternativeName>
        <fullName evidence="1">UDP-N-acetylmuramoyl-L-alanine synthetase</fullName>
    </alternativeName>
</protein>
<comment type="function">
    <text evidence="1">Cell wall formation.</text>
</comment>
<comment type="catalytic activity">
    <reaction evidence="1">
        <text>UDP-N-acetyl-alpha-D-muramate + L-alanine + ATP = UDP-N-acetyl-alpha-D-muramoyl-L-alanine + ADP + phosphate + H(+)</text>
        <dbReference type="Rhea" id="RHEA:23372"/>
        <dbReference type="ChEBI" id="CHEBI:15378"/>
        <dbReference type="ChEBI" id="CHEBI:30616"/>
        <dbReference type="ChEBI" id="CHEBI:43474"/>
        <dbReference type="ChEBI" id="CHEBI:57972"/>
        <dbReference type="ChEBI" id="CHEBI:70757"/>
        <dbReference type="ChEBI" id="CHEBI:83898"/>
        <dbReference type="ChEBI" id="CHEBI:456216"/>
        <dbReference type="EC" id="6.3.2.8"/>
    </reaction>
</comment>
<comment type="pathway">
    <text evidence="1">Cell wall biogenesis; peptidoglycan biosynthesis.</text>
</comment>
<comment type="subcellular location">
    <subcellularLocation>
        <location evidence="1">Cytoplasm</location>
    </subcellularLocation>
</comment>
<comment type="similarity">
    <text evidence="1">Belongs to the MurCDEF family.</text>
</comment>
<accession>Q163J1</accession>
<evidence type="ECO:0000255" key="1">
    <source>
        <dbReference type="HAMAP-Rule" id="MF_00046"/>
    </source>
</evidence>
<proteinExistence type="inferred from homology"/>